<evidence type="ECO:0000250" key="1"/>
<evidence type="ECO:0000255" key="2"/>
<evidence type="ECO:0000305" key="3"/>
<proteinExistence type="inferred from homology"/>
<geneLocation type="chloroplast"/>
<protein>
    <recommendedName>
        <fullName>Photosystem I reaction center subunit VIII</fullName>
        <shortName>PSI-I</shortName>
    </recommendedName>
</protein>
<feature type="chain" id="PRO_0000194680" description="Photosystem I reaction center subunit VIII">
    <location>
        <begin position="1"/>
        <end position="36"/>
    </location>
</feature>
<feature type="transmembrane region" description="Helical" evidence="2">
    <location>
        <begin position="10"/>
        <end position="30"/>
    </location>
</feature>
<name>PSAI_WHEAT</name>
<organism>
    <name type="scientific">Triticum aestivum</name>
    <name type="common">Wheat</name>
    <dbReference type="NCBI Taxonomy" id="4565"/>
    <lineage>
        <taxon>Eukaryota</taxon>
        <taxon>Viridiplantae</taxon>
        <taxon>Streptophyta</taxon>
        <taxon>Embryophyta</taxon>
        <taxon>Tracheophyta</taxon>
        <taxon>Spermatophyta</taxon>
        <taxon>Magnoliopsida</taxon>
        <taxon>Liliopsida</taxon>
        <taxon>Poales</taxon>
        <taxon>Poaceae</taxon>
        <taxon>BOP clade</taxon>
        <taxon>Pooideae</taxon>
        <taxon>Triticodae</taxon>
        <taxon>Triticeae</taxon>
        <taxon>Triticinae</taxon>
        <taxon>Triticum</taxon>
    </lineage>
</organism>
<accession>P69398</accession>
<accession>P25410</accession>
<comment type="function">
    <text evidence="1">May help in the organization of the PsaL subunit.</text>
</comment>
<comment type="subcellular location">
    <subcellularLocation>
        <location evidence="1">Plastid</location>
        <location evidence="1">Chloroplast thylakoid membrane</location>
        <topology evidence="1">Single-pass membrane protein</topology>
    </subcellularLocation>
</comment>
<comment type="similarity">
    <text evidence="3">Belongs to the PsaI family.</text>
</comment>
<dbReference type="EMBL" id="X62117">
    <property type="protein sequence ID" value="CAA44029.1"/>
    <property type="molecule type" value="Genomic_DNA"/>
</dbReference>
<dbReference type="EMBL" id="AB042240">
    <property type="protein sequence ID" value="BAB47043.1"/>
    <property type="molecule type" value="Genomic_DNA"/>
</dbReference>
<dbReference type="PIR" id="S17324">
    <property type="entry name" value="S17324"/>
</dbReference>
<dbReference type="RefSeq" id="NP_114268.1">
    <property type="nucleotide sequence ID" value="NC_002762.1"/>
</dbReference>
<dbReference type="SMR" id="P69398"/>
<dbReference type="STRING" id="4565.P69398"/>
<dbReference type="PaxDb" id="4565-EPlTAEP00000010031"/>
<dbReference type="EnsemblPlants" id="TraesCAD_scaffold_064430_01G000100.1">
    <property type="protein sequence ID" value="TraesCAD_scaffold_064430_01G000100.1"/>
    <property type="gene ID" value="TraesCAD_scaffold_064430_01G000100"/>
</dbReference>
<dbReference type="EnsemblPlants" id="TraesCAD_scaffold_1022770_01G000100.1">
    <property type="protein sequence ID" value="TraesCAD_scaffold_1022770_01G000100.1"/>
    <property type="gene ID" value="TraesCAD_scaffold_1022770_01G000100"/>
</dbReference>
<dbReference type="EnsemblPlants" id="TraesCAD_scaffold_975280_01G000100.1">
    <property type="protein sequence ID" value="TraesCAD_scaffold_975280_01G000100.1"/>
    <property type="gene ID" value="TraesCAD_scaffold_975280_01G000100"/>
</dbReference>
<dbReference type="EnsemblPlants" id="TraesCLE_scaffold_108428_01G000100.1">
    <property type="protein sequence ID" value="TraesCLE_scaffold_108428_01G000100.1"/>
    <property type="gene ID" value="TraesCLE_scaffold_108428_01G000100"/>
</dbReference>
<dbReference type="EnsemblPlants" id="TraesCLE_scaffold_855699_01G000100.1">
    <property type="protein sequence ID" value="TraesCLE_scaffold_855699_01G000100.1"/>
    <property type="gene ID" value="TraesCLE_scaffold_855699_01G000100"/>
</dbReference>
<dbReference type="EnsemblPlants" id="TraesCS1A02G385000.1">
    <property type="protein sequence ID" value="TraesCS1A02G385000.1.cds1"/>
    <property type="gene ID" value="TraesCS1A02G385000"/>
</dbReference>
<dbReference type="EnsemblPlants" id="TraesCS1A03G0931900.1">
    <property type="protein sequence ID" value="TraesCS1A03G0931900.1.CDS1"/>
    <property type="gene ID" value="TraesCS1A03G0931900"/>
</dbReference>
<dbReference type="EnsemblPlants" id="TraesCS2A02G470800.1">
    <property type="protein sequence ID" value="TraesCS2A02G470800.1.cds1"/>
    <property type="gene ID" value="TraesCS2A02G470800"/>
</dbReference>
<dbReference type="EnsemblPlants" id="TraesCS2A03G1105700.1">
    <property type="protein sequence ID" value="TraesCS2A03G1105700.1.CDS1"/>
    <property type="gene ID" value="TraesCS2A03G1105700"/>
</dbReference>
<dbReference type="EnsemblPlants" id="TraesCS3A02G343800.1">
    <property type="protein sequence ID" value="TraesCS3A02G343800.1.cds1"/>
    <property type="gene ID" value="TraesCS3A02G343800"/>
</dbReference>
<dbReference type="EnsemblPlants" id="TraesCS3A03G0822400.1">
    <property type="protein sequence ID" value="TraesCS3A03G0822400.1.CDS1"/>
    <property type="gene ID" value="TraesCS3A03G0822400"/>
</dbReference>
<dbReference type="EnsemblPlants" id="TraesCS3B03G0446400.1">
    <property type="protein sequence ID" value="TraesCS3B03G0446400.1.CDS1"/>
    <property type="gene ID" value="TraesCS3B03G0446400"/>
</dbReference>
<dbReference type="EnsemblPlants" id="TraesCS5D02G010100.1">
    <property type="protein sequence ID" value="TraesCS5D02G010100.1.cds1"/>
    <property type="gene ID" value="TraesCS5D02G010100"/>
</dbReference>
<dbReference type="EnsemblPlants" id="TraesCS5D03G0016300.1">
    <property type="protein sequence ID" value="TraesCS5D03G0016300.1.CDS1"/>
    <property type="gene ID" value="TraesCS5D03G0016300"/>
</dbReference>
<dbReference type="EnsemblPlants" id="TraesCSU02G268000.1">
    <property type="protein sequence ID" value="TraesCSU02G268000.1.cds1"/>
    <property type="gene ID" value="TraesCSU02G268000"/>
</dbReference>
<dbReference type="EnsemblPlants" id="TraesCSU03G0536400.1">
    <property type="protein sequence ID" value="TraesCSU03G0536400.1.CDS1"/>
    <property type="gene ID" value="TraesCSU03G0536400"/>
</dbReference>
<dbReference type="EnsemblPlants" id="TraesJAG5D03G03024590.1">
    <property type="protein sequence ID" value="TraesJAG5D03G03024590.1.CDS1"/>
    <property type="gene ID" value="TraesJAG5D03G03024590"/>
</dbReference>
<dbReference type="EnsemblPlants" id="TraesJUL2A03G00783560.1">
    <property type="protein sequence ID" value="TraesJUL2A03G00783560.1.CDS1"/>
    <property type="gene ID" value="TraesJUL2A03G00783560"/>
</dbReference>
<dbReference type="EnsemblPlants" id="TraesJUL3B03G01620800.1">
    <property type="protein sequence ID" value="TraesJUL3B03G01620800.1.CDS1"/>
    <property type="gene ID" value="TraesJUL3B03G01620800"/>
</dbReference>
<dbReference type="EnsemblPlants" id="TraesLAC2A03G00782910.1">
    <property type="protein sequence ID" value="TraesLAC2A03G00782910.1.CDS1"/>
    <property type="gene ID" value="TraesLAC2A03G00782910"/>
</dbReference>
<dbReference type="EnsemblPlants" id="TraesLAC3B03G01549570.1">
    <property type="protein sequence ID" value="TraesLAC3B03G01549570.1.CDS1"/>
    <property type="gene ID" value="TraesLAC3B03G01549570"/>
</dbReference>
<dbReference type="EnsemblPlants" id="TraesLAC5D03G02981940.1">
    <property type="protein sequence ID" value="TraesLAC5D03G02981940.1.CDS1"/>
    <property type="gene ID" value="TraesLAC5D03G02981940"/>
</dbReference>
<dbReference type="EnsemblPlants" id="TraesLDM3B03G01608200.1">
    <property type="protein sequence ID" value="TraesLDM3B03G01608200.1.CDS1"/>
    <property type="gene ID" value="TraesLDM3B03G01608200"/>
</dbReference>
<dbReference type="EnsemblPlants" id="TraesMAC2A03G00777900.1">
    <property type="protein sequence ID" value="TraesMAC2A03G00777900.1.CDS1"/>
    <property type="gene ID" value="TraesMAC2A03G00777900"/>
</dbReference>
<dbReference type="EnsemblPlants" id="TraesNOR2A03G00789170.1">
    <property type="protein sequence ID" value="TraesNOR2A03G00789170.1.CDS1"/>
    <property type="gene ID" value="TraesNOR2A03G00789170"/>
</dbReference>
<dbReference type="EnsemblPlants" id="TraesPARA_EIv1.0_0758250.1">
    <property type="protein sequence ID" value="TraesPARA_EIv1.0_0758250.1.CDS1"/>
    <property type="gene ID" value="TraesPARA_EIv1.0_0758250"/>
</dbReference>
<dbReference type="EnsemblPlants" id="TraesPARA_EIv1.0_0849750.1">
    <property type="protein sequence ID" value="TraesPARA_EIv1.0_0849750.1.CDS1"/>
    <property type="gene ID" value="TraesPARA_EIv1.0_0849750"/>
</dbReference>
<dbReference type="EnsemblPlants" id="TraesPARA_EIv1.0_1762770.1">
    <property type="protein sequence ID" value="TraesPARA_EIv1.0_1762770.1.CDS1"/>
    <property type="gene ID" value="TraesPARA_EIv1.0_1762770"/>
</dbReference>
<dbReference type="EnsemblPlants" id="TraesPARA_EIv1.0_1996940.1">
    <property type="protein sequence ID" value="TraesPARA_EIv1.0_1996940.1.CDS1"/>
    <property type="gene ID" value="TraesPARA_EIv1.0_1996940"/>
</dbReference>
<dbReference type="EnsemblPlants" id="TraesPARA_EIv1.0_2055000.1">
    <property type="protein sequence ID" value="TraesPARA_EIv1.0_2055000.1.CDS1"/>
    <property type="gene ID" value="TraesPARA_EIv1.0_2055000"/>
</dbReference>
<dbReference type="EnsemblPlants" id="TraesPARA_EIv1.0_2643840.1">
    <property type="protein sequence ID" value="TraesPARA_EIv1.0_2643840.1.CDS1"/>
    <property type="gene ID" value="TraesPARA_EIv1.0_2643840"/>
</dbReference>
<dbReference type="EnsemblPlants" id="TraesPARA_EIv1.0_2682140.1">
    <property type="protein sequence ID" value="TraesPARA_EIv1.0_2682140.1.CDS1"/>
    <property type="gene ID" value="TraesPARA_EIv1.0_2682140"/>
</dbReference>
<dbReference type="EnsemblPlants" id="TraesRN1A0100991800.1">
    <property type="protein sequence ID" value="TraesRN1A0100991800.1"/>
    <property type="gene ID" value="TraesRN1A0100991800"/>
</dbReference>
<dbReference type="EnsemblPlants" id="TraesRN1A0100991900.1">
    <property type="protein sequence ID" value="TraesRN1A0100991900.1"/>
    <property type="gene ID" value="TraesRN1A0100991900"/>
</dbReference>
<dbReference type="EnsemblPlants" id="TraesRN3A0100840200.1">
    <property type="protein sequence ID" value="TraesRN3A0100840200.1"/>
    <property type="gene ID" value="TraesRN3A0100840200"/>
</dbReference>
<dbReference type="EnsemblPlants" id="TraesRN3B0100436600.1">
    <property type="protein sequence ID" value="TraesRN3B0100436600.1"/>
    <property type="gene ID" value="TraesRN3B0100436600"/>
</dbReference>
<dbReference type="EnsemblPlants" id="TraesRN5D0100017400.1">
    <property type="protein sequence ID" value="TraesRN5D0100017400.1"/>
    <property type="gene ID" value="TraesRN5D0100017400"/>
</dbReference>
<dbReference type="EnsemblPlants" id="TraesRN6A0100408200.1">
    <property type="protein sequence ID" value="TraesRN6A0100408200.1"/>
    <property type="gene ID" value="TraesRN6A0100408200"/>
</dbReference>
<dbReference type="EnsemblPlants" id="TraesRN6D0100806200.1">
    <property type="protein sequence ID" value="TraesRN6D0100806200.1"/>
    <property type="gene ID" value="TraesRN6D0100806200"/>
</dbReference>
<dbReference type="EnsemblPlants" id="TraesROB_scaffold_068400_01G000100.1">
    <property type="protein sequence ID" value="TraesROB_scaffold_068400_01G000100.1"/>
    <property type="gene ID" value="TraesROB_scaffold_068400_01G000100"/>
</dbReference>
<dbReference type="EnsemblPlants" id="TraesROB_scaffold_100422_01G000100.1">
    <property type="protein sequence ID" value="TraesROB_scaffold_100422_01G000100.1"/>
    <property type="gene ID" value="TraesROB_scaffold_100422_01G000100"/>
</dbReference>
<dbReference type="EnsemblPlants" id="TraesSTA2A03G00777120.1">
    <property type="protein sequence ID" value="TraesSTA2A03G00777120.1.CDS1"/>
    <property type="gene ID" value="TraesSTA2A03G00777120"/>
</dbReference>
<dbReference type="EnsemblPlants" id="TraesSYM2A03G00786810.1">
    <property type="protein sequence ID" value="TraesSYM2A03G00786810.1.CDS1"/>
    <property type="gene ID" value="TraesSYM2A03G00786810"/>
</dbReference>
<dbReference type="EnsemblPlants" id="TraesWEE_scaffold_123024_01G000100.1">
    <property type="protein sequence ID" value="TraesWEE_scaffold_123024_01G000100.1"/>
    <property type="gene ID" value="TraesWEE_scaffold_123024_01G000100"/>
</dbReference>
<dbReference type="EnsemblPlants" id="TraesWEE_scaffold_167673_01G000100.1">
    <property type="protein sequence ID" value="TraesWEE_scaffold_167673_01G000100.1"/>
    <property type="gene ID" value="TraesWEE_scaffold_167673_01G000100"/>
</dbReference>
<dbReference type="EnsemblPlants" id="TraesWEE_scaffold_185985_01G000100.1">
    <property type="protein sequence ID" value="TraesWEE_scaffold_185985_01G000100.1"/>
    <property type="gene ID" value="TraesWEE_scaffold_185985_01G000100"/>
</dbReference>
<dbReference type="EnsemblPlants" id="TraesWEE_scaffold_855048_01G000100.1">
    <property type="protein sequence ID" value="TraesWEE_scaffold_855048_01G000100.1"/>
    <property type="gene ID" value="TraesWEE_scaffold_855048_01G000100"/>
</dbReference>
<dbReference type="GeneID" id="803175"/>
<dbReference type="Gramene" id="TraesCAD_scaffold_064430_01G000100.1">
    <property type="protein sequence ID" value="TraesCAD_scaffold_064430_01G000100.1"/>
    <property type="gene ID" value="TraesCAD_scaffold_064430_01G000100"/>
</dbReference>
<dbReference type="Gramene" id="TraesCAD_scaffold_1022770_01G000100.1">
    <property type="protein sequence ID" value="TraesCAD_scaffold_1022770_01G000100.1"/>
    <property type="gene ID" value="TraesCAD_scaffold_1022770_01G000100"/>
</dbReference>
<dbReference type="Gramene" id="TraesCAD_scaffold_975280_01G000100.1">
    <property type="protein sequence ID" value="TraesCAD_scaffold_975280_01G000100.1"/>
    <property type="gene ID" value="TraesCAD_scaffold_975280_01G000100"/>
</dbReference>
<dbReference type="Gramene" id="TraesCLE_scaffold_108428_01G000100.1">
    <property type="protein sequence ID" value="TraesCLE_scaffold_108428_01G000100.1"/>
    <property type="gene ID" value="TraesCLE_scaffold_108428_01G000100"/>
</dbReference>
<dbReference type="Gramene" id="TraesCLE_scaffold_855699_01G000100.1">
    <property type="protein sequence ID" value="TraesCLE_scaffold_855699_01G000100.1"/>
    <property type="gene ID" value="TraesCLE_scaffold_855699_01G000100"/>
</dbReference>
<dbReference type="Gramene" id="TraesCS1A02G385000.1">
    <property type="protein sequence ID" value="TraesCS1A02G385000.1.cds1"/>
    <property type="gene ID" value="TraesCS1A02G385000"/>
</dbReference>
<dbReference type="Gramene" id="TraesCS1A03G0931900.1">
    <property type="protein sequence ID" value="TraesCS1A03G0931900.1.CDS1"/>
    <property type="gene ID" value="TraesCS1A03G0931900"/>
</dbReference>
<dbReference type="Gramene" id="TraesCS2A02G470800.1">
    <property type="protein sequence ID" value="TraesCS2A02G470800.1.cds1"/>
    <property type="gene ID" value="TraesCS2A02G470800"/>
</dbReference>
<dbReference type="Gramene" id="TraesCS2A03G1105700.1">
    <property type="protein sequence ID" value="TraesCS2A03G1105700.1.CDS1"/>
    <property type="gene ID" value="TraesCS2A03G1105700"/>
</dbReference>
<dbReference type="Gramene" id="TraesCS3A02G343800.1">
    <property type="protein sequence ID" value="TraesCS3A02G343800.1.cds1"/>
    <property type="gene ID" value="TraesCS3A02G343800"/>
</dbReference>
<dbReference type="Gramene" id="TraesCS3A03G0822400.1">
    <property type="protein sequence ID" value="TraesCS3A03G0822400.1.CDS1"/>
    <property type="gene ID" value="TraesCS3A03G0822400"/>
</dbReference>
<dbReference type="Gramene" id="TraesCS3B03G0446400.1">
    <property type="protein sequence ID" value="TraesCS3B03G0446400.1.CDS1"/>
    <property type="gene ID" value="TraesCS3B03G0446400"/>
</dbReference>
<dbReference type="Gramene" id="TraesCS5D02G010100.1">
    <property type="protein sequence ID" value="TraesCS5D02G010100.1.cds1"/>
    <property type="gene ID" value="TraesCS5D02G010100"/>
</dbReference>
<dbReference type="Gramene" id="TraesCS5D03G0016300.1">
    <property type="protein sequence ID" value="TraesCS5D03G0016300.1.CDS1"/>
    <property type="gene ID" value="TraesCS5D03G0016300"/>
</dbReference>
<dbReference type="Gramene" id="TraesCSU02G268000.1">
    <property type="protein sequence ID" value="TraesCSU02G268000.1.cds1"/>
    <property type="gene ID" value="TraesCSU02G268000"/>
</dbReference>
<dbReference type="Gramene" id="TraesCSU03G0536400.1">
    <property type="protein sequence ID" value="TraesCSU03G0536400.1.CDS1"/>
    <property type="gene ID" value="TraesCSU03G0536400"/>
</dbReference>
<dbReference type="Gramene" id="TraesJAG5D03G03024590.1">
    <property type="protein sequence ID" value="TraesJAG5D03G03024590.1.CDS1"/>
    <property type="gene ID" value="TraesJAG5D03G03024590"/>
</dbReference>
<dbReference type="Gramene" id="TraesJUL2A03G00783560.1">
    <property type="protein sequence ID" value="TraesJUL2A03G00783560.1.CDS1"/>
    <property type="gene ID" value="TraesJUL2A03G00783560"/>
</dbReference>
<dbReference type="Gramene" id="TraesJUL3B03G01620800.1">
    <property type="protein sequence ID" value="TraesJUL3B03G01620800.1.CDS1"/>
    <property type="gene ID" value="TraesJUL3B03G01620800"/>
</dbReference>
<dbReference type="Gramene" id="TraesLAC2A03G00782910.1">
    <property type="protein sequence ID" value="TraesLAC2A03G00782910.1.CDS1"/>
    <property type="gene ID" value="TraesLAC2A03G00782910"/>
</dbReference>
<dbReference type="Gramene" id="TraesLAC3B03G01549570.1">
    <property type="protein sequence ID" value="TraesLAC3B03G01549570.1.CDS1"/>
    <property type="gene ID" value="TraesLAC3B03G01549570"/>
</dbReference>
<dbReference type="Gramene" id="TraesLAC5D03G02981940.1">
    <property type="protein sequence ID" value="TraesLAC5D03G02981940.1.CDS1"/>
    <property type="gene ID" value="TraesLAC5D03G02981940"/>
</dbReference>
<dbReference type="Gramene" id="TraesLDM3B03G01608200.1">
    <property type="protein sequence ID" value="TraesLDM3B03G01608200.1.CDS1"/>
    <property type="gene ID" value="TraesLDM3B03G01608200"/>
</dbReference>
<dbReference type="Gramene" id="TraesMAC2A03G00777900.1">
    <property type="protein sequence ID" value="TraesMAC2A03G00777900.1.CDS1"/>
    <property type="gene ID" value="TraesMAC2A03G00777900"/>
</dbReference>
<dbReference type="Gramene" id="TraesNOR2A03G00789170.1">
    <property type="protein sequence ID" value="TraesNOR2A03G00789170.1.CDS1"/>
    <property type="gene ID" value="TraesNOR2A03G00789170"/>
</dbReference>
<dbReference type="Gramene" id="TraesPARA_EIv1.0_0758250.1">
    <property type="protein sequence ID" value="TraesPARA_EIv1.0_0758250.1.CDS1"/>
    <property type="gene ID" value="TraesPARA_EIv1.0_0758250"/>
</dbReference>
<dbReference type="Gramene" id="TraesPARA_EIv1.0_0849750.1">
    <property type="protein sequence ID" value="TraesPARA_EIv1.0_0849750.1.CDS1"/>
    <property type="gene ID" value="TraesPARA_EIv1.0_0849750"/>
</dbReference>
<dbReference type="Gramene" id="TraesPARA_EIv1.0_1762770.1">
    <property type="protein sequence ID" value="TraesPARA_EIv1.0_1762770.1.CDS1"/>
    <property type="gene ID" value="TraesPARA_EIv1.0_1762770"/>
</dbReference>
<dbReference type="Gramene" id="TraesPARA_EIv1.0_1996940.1">
    <property type="protein sequence ID" value="TraesPARA_EIv1.0_1996940.1.CDS1"/>
    <property type="gene ID" value="TraesPARA_EIv1.0_1996940"/>
</dbReference>
<dbReference type="Gramene" id="TraesPARA_EIv1.0_2055000.1">
    <property type="protein sequence ID" value="TraesPARA_EIv1.0_2055000.1.CDS1"/>
    <property type="gene ID" value="TraesPARA_EIv1.0_2055000"/>
</dbReference>
<dbReference type="Gramene" id="TraesPARA_EIv1.0_2643840.1">
    <property type="protein sequence ID" value="TraesPARA_EIv1.0_2643840.1.CDS1"/>
    <property type="gene ID" value="TraesPARA_EIv1.0_2643840"/>
</dbReference>
<dbReference type="Gramene" id="TraesPARA_EIv1.0_2682140.1">
    <property type="protein sequence ID" value="TraesPARA_EIv1.0_2682140.1.CDS1"/>
    <property type="gene ID" value="TraesPARA_EIv1.0_2682140"/>
</dbReference>
<dbReference type="Gramene" id="TraesRN1A0100991800.1">
    <property type="protein sequence ID" value="TraesRN1A0100991800.1"/>
    <property type="gene ID" value="TraesRN1A0100991800"/>
</dbReference>
<dbReference type="Gramene" id="TraesRN1A0100991900.1">
    <property type="protein sequence ID" value="TraesRN1A0100991900.1"/>
    <property type="gene ID" value="TraesRN1A0100991900"/>
</dbReference>
<dbReference type="Gramene" id="TraesRN3A0100840200.1">
    <property type="protein sequence ID" value="TraesRN3A0100840200.1"/>
    <property type="gene ID" value="TraesRN3A0100840200"/>
</dbReference>
<dbReference type="Gramene" id="TraesRN3B0100436600.1">
    <property type="protein sequence ID" value="TraesRN3B0100436600.1"/>
    <property type="gene ID" value="TraesRN3B0100436600"/>
</dbReference>
<dbReference type="Gramene" id="TraesRN5D0100017400.1">
    <property type="protein sequence ID" value="TraesRN5D0100017400.1"/>
    <property type="gene ID" value="TraesRN5D0100017400"/>
</dbReference>
<dbReference type="Gramene" id="TraesRN6A0100408200.1">
    <property type="protein sequence ID" value="TraesRN6A0100408200.1"/>
    <property type="gene ID" value="TraesRN6A0100408200"/>
</dbReference>
<dbReference type="Gramene" id="TraesRN6D0100806200.1">
    <property type="protein sequence ID" value="TraesRN6D0100806200.1"/>
    <property type="gene ID" value="TraesRN6D0100806200"/>
</dbReference>
<dbReference type="Gramene" id="TraesROB_scaffold_068400_01G000100.1">
    <property type="protein sequence ID" value="TraesROB_scaffold_068400_01G000100.1"/>
    <property type="gene ID" value="TraesROB_scaffold_068400_01G000100"/>
</dbReference>
<dbReference type="Gramene" id="TraesROB_scaffold_100422_01G000100.1">
    <property type="protein sequence ID" value="TraesROB_scaffold_100422_01G000100.1"/>
    <property type="gene ID" value="TraesROB_scaffold_100422_01G000100"/>
</dbReference>
<dbReference type="Gramene" id="TraesSTA2A03G00777120.1">
    <property type="protein sequence ID" value="TraesSTA2A03G00777120.1.CDS1"/>
    <property type="gene ID" value="TraesSTA2A03G00777120"/>
</dbReference>
<dbReference type="Gramene" id="TraesSYM2A03G00786810.1">
    <property type="protein sequence ID" value="TraesSYM2A03G00786810.1.CDS1"/>
    <property type="gene ID" value="TraesSYM2A03G00786810"/>
</dbReference>
<dbReference type="Gramene" id="TraesWEE_scaffold_123024_01G000100.1">
    <property type="protein sequence ID" value="TraesWEE_scaffold_123024_01G000100.1"/>
    <property type="gene ID" value="TraesWEE_scaffold_123024_01G000100"/>
</dbReference>
<dbReference type="Gramene" id="TraesWEE_scaffold_167673_01G000100.1">
    <property type="protein sequence ID" value="TraesWEE_scaffold_167673_01G000100.1"/>
    <property type="gene ID" value="TraesWEE_scaffold_167673_01G000100"/>
</dbReference>
<dbReference type="Gramene" id="TraesWEE_scaffold_185985_01G000100.1">
    <property type="protein sequence ID" value="TraesWEE_scaffold_185985_01G000100.1"/>
    <property type="gene ID" value="TraesWEE_scaffold_185985_01G000100"/>
</dbReference>
<dbReference type="Gramene" id="TraesWEE_scaffold_855048_01G000100.1">
    <property type="protein sequence ID" value="TraesWEE_scaffold_855048_01G000100.1"/>
    <property type="gene ID" value="TraesWEE_scaffold_855048_01G000100"/>
</dbReference>
<dbReference type="KEGG" id="taes:803175"/>
<dbReference type="eggNOG" id="ENOG502SE4W">
    <property type="taxonomic scope" value="Eukaryota"/>
</dbReference>
<dbReference type="HOGENOM" id="CLU_215282_1_0_1"/>
<dbReference type="OrthoDB" id="35618at2759"/>
<dbReference type="Proteomes" id="UP000019116">
    <property type="component" value="Chloroplast"/>
</dbReference>
<dbReference type="GO" id="GO:0009535">
    <property type="term" value="C:chloroplast thylakoid membrane"/>
    <property type="evidence" value="ECO:0007669"/>
    <property type="project" value="UniProtKB-SubCell"/>
</dbReference>
<dbReference type="GO" id="GO:0009522">
    <property type="term" value="C:photosystem I"/>
    <property type="evidence" value="ECO:0007669"/>
    <property type="project" value="UniProtKB-KW"/>
</dbReference>
<dbReference type="GO" id="GO:0015979">
    <property type="term" value="P:photosynthesis"/>
    <property type="evidence" value="ECO:0007669"/>
    <property type="project" value="UniProtKB-UniRule"/>
</dbReference>
<dbReference type="HAMAP" id="MF_00431">
    <property type="entry name" value="PSI_PsaI"/>
    <property type="match status" value="1"/>
</dbReference>
<dbReference type="InterPro" id="IPR001302">
    <property type="entry name" value="PSI_PsaI"/>
</dbReference>
<dbReference type="InterPro" id="IPR036357">
    <property type="entry name" value="PSI_PsaI_sf"/>
</dbReference>
<dbReference type="NCBIfam" id="TIGR03052">
    <property type="entry name" value="PS_I_psaI"/>
    <property type="match status" value="1"/>
</dbReference>
<dbReference type="PANTHER" id="PTHR35775">
    <property type="match status" value="1"/>
</dbReference>
<dbReference type="PANTHER" id="PTHR35775:SF2">
    <property type="entry name" value="PHOTOSYSTEM I REACTION CENTER SUBUNIT VIII"/>
    <property type="match status" value="1"/>
</dbReference>
<dbReference type="Pfam" id="PF00796">
    <property type="entry name" value="PSI_8"/>
    <property type="match status" value="1"/>
</dbReference>
<dbReference type="SUPFAM" id="SSF81540">
    <property type="entry name" value="Subunit VIII of photosystem I reaction centre, PsaI"/>
    <property type="match status" value="1"/>
</dbReference>
<reference key="1">
    <citation type="journal article" date="1991" name="Genetics">
        <title>Molecular analysis of the hot spot region related to length mutations in wheat chloroplast DNAs. I. Nucleotide divergence of genes and intergenic spacer regions located in the hot spot region.</title>
        <authorList>
            <person name="Ogihara Y."/>
            <person name="Terachi T."/>
            <person name="Sasakuma T."/>
        </authorList>
    </citation>
    <scope>NUCLEOTIDE SEQUENCE [GENOMIC DNA]</scope>
    <source>
        <strain>cv. Chinese Spring</strain>
        <tissue>Seedling</tissue>
    </source>
</reference>
<reference key="2">
    <citation type="journal article" date="2000" name="Plant Mol. Biol. Rep.">
        <title>Chinese spring wheat (Triticum aestivum L.) chloroplast genome: complete sequence and contig clones.</title>
        <authorList>
            <person name="Ogihara Y."/>
            <person name="Isono K."/>
            <person name="Kojima T."/>
            <person name="Endo A."/>
            <person name="Hanaoka M."/>
            <person name="Shiina T."/>
            <person name="Terachi T."/>
            <person name="Utsugi S."/>
            <person name="Murata M."/>
            <person name="Mori N."/>
            <person name="Takumi S."/>
            <person name="Ikeo K."/>
            <person name="Gojobori T."/>
            <person name="Murai R."/>
            <person name="Murai K."/>
            <person name="Matsuoka Y."/>
            <person name="Ohnishi Y."/>
            <person name="Tajiri H."/>
            <person name="Tsunewaki K."/>
        </authorList>
    </citation>
    <scope>NUCLEOTIDE SEQUENCE [LARGE SCALE GENOMIC DNA]</scope>
    <source>
        <strain>cv. Chinese Spring</strain>
    </source>
</reference>
<sequence>MTDLNLPSIFVPLVGLVFPAIAMTSLFLYVQKNKIV</sequence>
<keyword id="KW-0150">Chloroplast</keyword>
<keyword id="KW-0472">Membrane</keyword>
<keyword id="KW-0602">Photosynthesis</keyword>
<keyword id="KW-0603">Photosystem I</keyword>
<keyword id="KW-0934">Plastid</keyword>
<keyword id="KW-1185">Reference proteome</keyword>
<keyword id="KW-0793">Thylakoid</keyword>
<keyword id="KW-0812">Transmembrane</keyword>
<keyword id="KW-1133">Transmembrane helix</keyword>
<gene>
    <name type="primary">psaI</name>
</gene>